<organism>
    <name type="scientific">Bacillus anthracis</name>
    <dbReference type="NCBI Taxonomy" id="1392"/>
    <lineage>
        <taxon>Bacteria</taxon>
        <taxon>Bacillati</taxon>
        <taxon>Bacillota</taxon>
        <taxon>Bacilli</taxon>
        <taxon>Bacillales</taxon>
        <taxon>Bacillaceae</taxon>
        <taxon>Bacillus</taxon>
        <taxon>Bacillus cereus group</taxon>
    </lineage>
</organism>
<protein>
    <recommendedName>
        <fullName evidence="1">4-hydroxy-tetrahydrodipicolinate reductase</fullName>
        <shortName evidence="1">HTPA reductase</shortName>
        <ecNumber evidence="1">1.17.1.8</ecNumber>
    </recommendedName>
</protein>
<gene>
    <name evidence="1" type="primary">dapB</name>
    <name type="ordered locus">BA_1555</name>
    <name type="ordered locus">GBAA_1555</name>
    <name type="ordered locus">BAS1442</name>
</gene>
<keyword id="KW-0028">Amino-acid biosynthesis</keyword>
<keyword id="KW-0963">Cytoplasm</keyword>
<keyword id="KW-0220">Diaminopimelate biosynthesis</keyword>
<keyword id="KW-0457">Lysine biosynthesis</keyword>
<keyword id="KW-0520">NAD</keyword>
<keyword id="KW-0521">NADP</keyword>
<keyword id="KW-0560">Oxidoreductase</keyword>
<keyword id="KW-1185">Reference proteome</keyword>
<reference key="1">
    <citation type="journal article" date="2003" name="Nature">
        <title>The genome sequence of Bacillus anthracis Ames and comparison to closely related bacteria.</title>
        <authorList>
            <person name="Read T.D."/>
            <person name="Peterson S.N."/>
            <person name="Tourasse N.J."/>
            <person name="Baillie L.W."/>
            <person name="Paulsen I.T."/>
            <person name="Nelson K.E."/>
            <person name="Tettelin H."/>
            <person name="Fouts D.E."/>
            <person name="Eisen J.A."/>
            <person name="Gill S.R."/>
            <person name="Holtzapple E.K."/>
            <person name="Okstad O.A."/>
            <person name="Helgason E."/>
            <person name="Rilstone J."/>
            <person name="Wu M."/>
            <person name="Kolonay J.F."/>
            <person name="Beanan M.J."/>
            <person name="Dodson R.J."/>
            <person name="Brinkac L.M."/>
            <person name="Gwinn M.L."/>
            <person name="DeBoy R.T."/>
            <person name="Madpu R."/>
            <person name="Daugherty S.C."/>
            <person name="Durkin A.S."/>
            <person name="Haft D.H."/>
            <person name="Nelson W.C."/>
            <person name="Peterson J.D."/>
            <person name="Pop M."/>
            <person name="Khouri H.M."/>
            <person name="Radune D."/>
            <person name="Benton J.L."/>
            <person name="Mahamoud Y."/>
            <person name="Jiang L."/>
            <person name="Hance I.R."/>
            <person name="Weidman J.F."/>
            <person name="Berry K.J."/>
            <person name="Plaut R.D."/>
            <person name="Wolf A.M."/>
            <person name="Watkins K.L."/>
            <person name="Nierman W.C."/>
            <person name="Hazen A."/>
            <person name="Cline R.T."/>
            <person name="Redmond C."/>
            <person name="Thwaite J.E."/>
            <person name="White O."/>
            <person name="Salzberg S.L."/>
            <person name="Thomason B."/>
            <person name="Friedlander A.M."/>
            <person name="Koehler T.M."/>
            <person name="Hanna P.C."/>
            <person name="Kolstoe A.-B."/>
            <person name="Fraser C.M."/>
        </authorList>
    </citation>
    <scope>NUCLEOTIDE SEQUENCE [LARGE SCALE GENOMIC DNA]</scope>
    <source>
        <strain>Ames / isolate Porton</strain>
    </source>
</reference>
<reference key="2">
    <citation type="journal article" date="2009" name="J. Bacteriol.">
        <title>The complete genome sequence of Bacillus anthracis Ames 'Ancestor'.</title>
        <authorList>
            <person name="Ravel J."/>
            <person name="Jiang L."/>
            <person name="Stanley S.T."/>
            <person name="Wilson M.R."/>
            <person name="Decker R.S."/>
            <person name="Read T.D."/>
            <person name="Worsham P."/>
            <person name="Keim P.S."/>
            <person name="Salzberg S.L."/>
            <person name="Fraser-Liggett C.M."/>
            <person name="Rasko D.A."/>
        </authorList>
    </citation>
    <scope>NUCLEOTIDE SEQUENCE [LARGE SCALE GENOMIC DNA]</scope>
    <source>
        <strain>Ames ancestor</strain>
    </source>
</reference>
<reference key="3">
    <citation type="submission" date="2004-01" db="EMBL/GenBank/DDBJ databases">
        <title>Complete genome sequence of Bacillus anthracis Sterne.</title>
        <authorList>
            <person name="Brettin T.S."/>
            <person name="Bruce D."/>
            <person name="Challacombe J.F."/>
            <person name="Gilna P."/>
            <person name="Han C."/>
            <person name="Hill K."/>
            <person name="Hitchcock P."/>
            <person name="Jackson P."/>
            <person name="Keim P."/>
            <person name="Longmire J."/>
            <person name="Lucas S."/>
            <person name="Okinaka R."/>
            <person name="Richardson P."/>
            <person name="Rubin E."/>
            <person name="Tice H."/>
        </authorList>
    </citation>
    <scope>NUCLEOTIDE SEQUENCE [LARGE SCALE GENOMIC DNA]</scope>
    <source>
        <strain>Sterne</strain>
    </source>
</reference>
<dbReference type="EC" id="1.17.1.8" evidence="1"/>
<dbReference type="EMBL" id="AE016879">
    <property type="protein sequence ID" value="AAP25491.1"/>
    <property type="molecule type" value="Genomic_DNA"/>
</dbReference>
<dbReference type="EMBL" id="AE017334">
    <property type="protein sequence ID" value="AAT30652.1"/>
    <property type="molecule type" value="Genomic_DNA"/>
</dbReference>
<dbReference type="EMBL" id="AE017225">
    <property type="protein sequence ID" value="AAT53762.1"/>
    <property type="molecule type" value="Genomic_DNA"/>
</dbReference>
<dbReference type="RefSeq" id="NP_844005.1">
    <property type="nucleotide sequence ID" value="NC_003997.3"/>
</dbReference>
<dbReference type="RefSeq" id="WP_000661726.1">
    <property type="nucleotide sequence ID" value="NZ_WXXJ01000001.1"/>
</dbReference>
<dbReference type="RefSeq" id="YP_027711.1">
    <property type="nucleotide sequence ID" value="NC_005945.1"/>
</dbReference>
<dbReference type="SMR" id="Q81SU0"/>
<dbReference type="STRING" id="261594.GBAA_1555"/>
<dbReference type="DNASU" id="1086847"/>
<dbReference type="GeneID" id="45021527"/>
<dbReference type="KEGG" id="ban:BA_1555"/>
<dbReference type="KEGG" id="banh:HYU01_07870"/>
<dbReference type="KEGG" id="bar:GBAA_1555"/>
<dbReference type="KEGG" id="bat:BAS1442"/>
<dbReference type="PATRIC" id="fig|198094.11.peg.1525"/>
<dbReference type="eggNOG" id="COG0289">
    <property type="taxonomic scope" value="Bacteria"/>
</dbReference>
<dbReference type="HOGENOM" id="CLU_047479_0_1_9"/>
<dbReference type="OMA" id="HHPNKAD"/>
<dbReference type="OrthoDB" id="9790352at2"/>
<dbReference type="UniPathway" id="UPA00034">
    <property type="reaction ID" value="UER00018"/>
</dbReference>
<dbReference type="Proteomes" id="UP000000427">
    <property type="component" value="Chromosome"/>
</dbReference>
<dbReference type="Proteomes" id="UP000000594">
    <property type="component" value="Chromosome"/>
</dbReference>
<dbReference type="GO" id="GO:0005829">
    <property type="term" value="C:cytosol"/>
    <property type="evidence" value="ECO:0007669"/>
    <property type="project" value="TreeGrafter"/>
</dbReference>
<dbReference type="GO" id="GO:0008839">
    <property type="term" value="F:4-hydroxy-tetrahydrodipicolinate reductase"/>
    <property type="evidence" value="ECO:0007669"/>
    <property type="project" value="UniProtKB-EC"/>
</dbReference>
<dbReference type="GO" id="GO:0051287">
    <property type="term" value="F:NAD binding"/>
    <property type="evidence" value="ECO:0007669"/>
    <property type="project" value="UniProtKB-UniRule"/>
</dbReference>
<dbReference type="GO" id="GO:0050661">
    <property type="term" value="F:NADP binding"/>
    <property type="evidence" value="ECO:0007669"/>
    <property type="project" value="UniProtKB-UniRule"/>
</dbReference>
<dbReference type="GO" id="GO:0016726">
    <property type="term" value="F:oxidoreductase activity, acting on CH or CH2 groups, NAD or NADP as acceptor"/>
    <property type="evidence" value="ECO:0007669"/>
    <property type="project" value="UniProtKB-UniRule"/>
</dbReference>
<dbReference type="GO" id="GO:0019877">
    <property type="term" value="P:diaminopimelate biosynthetic process"/>
    <property type="evidence" value="ECO:0007669"/>
    <property type="project" value="UniProtKB-UniRule"/>
</dbReference>
<dbReference type="GO" id="GO:0009089">
    <property type="term" value="P:lysine biosynthetic process via diaminopimelate"/>
    <property type="evidence" value="ECO:0007669"/>
    <property type="project" value="UniProtKB-UniRule"/>
</dbReference>
<dbReference type="CDD" id="cd02274">
    <property type="entry name" value="DHDPR_N"/>
    <property type="match status" value="1"/>
</dbReference>
<dbReference type="FunFam" id="3.30.360.10:FF:000009">
    <property type="entry name" value="4-hydroxy-tetrahydrodipicolinate reductase"/>
    <property type="match status" value="1"/>
</dbReference>
<dbReference type="FunFam" id="3.40.50.720:FF:000180">
    <property type="entry name" value="4-hydroxy-tetrahydrodipicolinate reductase"/>
    <property type="match status" value="1"/>
</dbReference>
<dbReference type="Gene3D" id="3.30.360.10">
    <property type="entry name" value="Dihydrodipicolinate Reductase, domain 2"/>
    <property type="match status" value="1"/>
</dbReference>
<dbReference type="Gene3D" id="3.40.50.720">
    <property type="entry name" value="NAD(P)-binding Rossmann-like Domain"/>
    <property type="match status" value="1"/>
</dbReference>
<dbReference type="HAMAP" id="MF_00102">
    <property type="entry name" value="DapB"/>
    <property type="match status" value="1"/>
</dbReference>
<dbReference type="InterPro" id="IPR022663">
    <property type="entry name" value="DapB_C"/>
</dbReference>
<dbReference type="InterPro" id="IPR000846">
    <property type="entry name" value="DapB_N"/>
</dbReference>
<dbReference type="InterPro" id="IPR022664">
    <property type="entry name" value="DapB_N_CS"/>
</dbReference>
<dbReference type="InterPro" id="IPR023940">
    <property type="entry name" value="DHDPR_bac"/>
</dbReference>
<dbReference type="InterPro" id="IPR036291">
    <property type="entry name" value="NAD(P)-bd_dom_sf"/>
</dbReference>
<dbReference type="NCBIfam" id="TIGR00036">
    <property type="entry name" value="dapB"/>
    <property type="match status" value="1"/>
</dbReference>
<dbReference type="PANTHER" id="PTHR20836:SF0">
    <property type="entry name" value="4-HYDROXY-TETRAHYDRODIPICOLINATE REDUCTASE 1, CHLOROPLASTIC-RELATED"/>
    <property type="match status" value="1"/>
</dbReference>
<dbReference type="PANTHER" id="PTHR20836">
    <property type="entry name" value="DIHYDRODIPICOLINATE REDUCTASE"/>
    <property type="match status" value="1"/>
</dbReference>
<dbReference type="Pfam" id="PF05173">
    <property type="entry name" value="DapB_C"/>
    <property type="match status" value="1"/>
</dbReference>
<dbReference type="Pfam" id="PF01113">
    <property type="entry name" value="DapB_N"/>
    <property type="match status" value="1"/>
</dbReference>
<dbReference type="PIRSF" id="PIRSF000161">
    <property type="entry name" value="DHPR"/>
    <property type="match status" value="1"/>
</dbReference>
<dbReference type="SUPFAM" id="SSF55347">
    <property type="entry name" value="Glyceraldehyde-3-phosphate dehydrogenase-like, C-terminal domain"/>
    <property type="match status" value="1"/>
</dbReference>
<dbReference type="SUPFAM" id="SSF51735">
    <property type="entry name" value="NAD(P)-binding Rossmann-fold domains"/>
    <property type="match status" value="1"/>
</dbReference>
<dbReference type="PROSITE" id="PS01298">
    <property type="entry name" value="DAPB"/>
    <property type="match status" value="1"/>
</dbReference>
<comment type="function">
    <text evidence="1">Catalyzes the conversion of 4-hydroxy-tetrahydrodipicolinate (HTPA) to tetrahydrodipicolinate.</text>
</comment>
<comment type="catalytic activity">
    <reaction evidence="1">
        <text>(S)-2,3,4,5-tetrahydrodipicolinate + NAD(+) + H2O = (2S,4S)-4-hydroxy-2,3,4,5-tetrahydrodipicolinate + NADH + H(+)</text>
        <dbReference type="Rhea" id="RHEA:35323"/>
        <dbReference type="ChEBI" id="CHEBI:15377"/>
        <dbReference type="ChEBI" id="CHEBI:15378"/>
        <dbReference type="ChEBI" id="CHEBI:16845"/>
        <dbReference type="ChEBI" id="CHEBI:57540"/>
        <dbReference type="ChEBI" id="CHEBI:57945"/>
        <dbReference type="ChEBI" id="CHEBI:67139"/>
        <dbReference type="EC" id="1.17.1.8"/>
    </reaction>
</comment>
<comment type="catalytic activity">
    <reaction evidence="1">
        <text>(S)-2,3,4,5-tetrahydrodipicolinate + NADP(+) + H2O = (2S,4S)-4-hydroxy-2,3,4,5-tetrahydrodipicolinate + NADPH + H(+)</text>
        <dbReference type="Rhea" id="RHEA:35331"/>
        <dbReference type="ChEBI" id="CHEBI:15377"/>
        <dbReference type="ChEBI" id="CHEBI:15378"/>
        <dbReference type="ChEBI" id="CHEBI:16845"/>
        <dbReference type="ChEBI" id="CHEBI:57783"/>
        <dbReference type="ChEBI" id="CHEBI:58349"/>
        <dbReference type="ChEBI" id="CHEBI:67139"/>
        <dbReference type="EC" id="1.17.1.8"/>
    </reaction>
</comment>
<comment type="pathway">
    <text evidence="1">Amino-acid biosynthesis; L-lysine biosynthesis via DAP pathway; (S)-tetrahydrodipicolinate from L-aspartate: step 4/4.</text>
</comment>
<comment type="subcellular location">
    <subcellularLocation>
        <location evidence="1">Cytoplasm</location>
    </subcellularLocation>
</comment>
<comment type="similarity">
    <text evidence="1">Belongs to the DapB family.</text>
</comment>
<comment type="caution">
    <text evidence="2">Was originally thought to be a dihydrodipicolinate reductase (DHDPR), catalyzing the conversion of dihydrodipicolinate to tetrahydrodipicolinate. However, it was shown in E.coli that the substrate of the enzymatic reaction is not dihydrodipicolinate (DHDP) but in fact (2S,4S)-4-hydroxy-2,3,4,5-tetrahydrodipicolinic acid (HTPA), the product released by the DapA-catalyzed reaction.</text>
</comment>
<accession>Q81SU0</accession>
<accession>Q6I120</accession>
<accession>Q6KUX3</accession>
<name>DAPB_BACAN</name>
<feature type="chain" id="PRO_0000141408" description="4-hydroxy-tetrahydrodipicolinate reductase">
    <location>
        <begin position="1"/>
        <end position="266"/>
    </location>
</feature>
<feature type="active site" description="Proton donor/acceptor" evidence="1">
    <location>
        <position position="155"/>
    </location>
</feature>
<feature type="active site" description="Proton donor" evidence="1">
    <location>
        <position position="159"/>
    </location>
</feature>
<feature type="binding site" evidence="1">
    <location>
        <begin position="10"/>
        <end position="15"/>
    </location>
    <ligand>
        <name>NAD(+)</name>
        <dbReference type="ChEBI" id="CHEBI:57540"/>
    </ligand>
</feature>
<feature type="binding site" evidence="1">
    <location>
        <position position="38"/>
    </location>
    <ligand>
        <name>NADP(+)</name>
        <dbReference type="ChEBI" id="CHEBI:58349"/>
    </ligand>
</feature>
<feature type="binding site" evidence="1">
    <location>
        <begin position="99"/>
        <end position="101"/>
    </location>
    <ligand>
        <name>NAD(+)</name>
        <dbReference type="ChEBI" id="CHEBI:57540"/>
    </ligand>
</feature>
<feature type="binding site" evidence="1">
    <location>
        <begin position="125"/>
        <end position="128"/>
    </location>
    <ligand>
        <name>NAD(+)</name>
        <dbReference type="ChEBI" id="CHEBI:57540"/>
    </ligand>
</feature>
<feature type="binding site" evidence="1">
    <location>
        <position position="156"/>
    </location>
    <ligand>
        <name>(S)-2,3,4,5-tetrahydrodipicolinate</name>
        <dbReference type="ChEBI" id="CHEBI:16845"/>
    </ligand>
</feature>
<feature type="binding site" evidence="1">
    <location>
        <begin position="165"/>
        <end position="166"/>
    </location>
    <ligand>
        <name>(S)-2,3,4,5-tetrahydrodipicolinate</name>
        <dbReference type="ChEBI" id="CHEBI:16845"/>
    </ligand>
</feature>
<proteinExistence type="inferred from homology"/>
<evidence type="ECO:0000255" key="1">
    <source>
        <dbReference type="HAMAP-Rule" id="MF_00102"/>
    </source>
</evidence>
<evidence type="ECO:0000305" key="2"/>
<sequence>MKEMKVIIAGPRGRMGHEAVLLMERTEHFNLVAAVDYKHGGEKISDLPGMPALDATIYADLHTCLEEVEADVLLDLTTPEVGKQHVTLAVERGLRSVIGTTGFTEEELKQLTETAKEKAVGTIIAPNFAIGAVLMMKFSQMAAKYFQDVEVIELHHDQKLDAPSGTAVKTVELIRQNRESKQQGHPNEVEQLEGARGANVDGIHIHSVRLPGLIAHQEVMFGGDGQMLTVRHDSFNRASFMSGVKLSIETVMNLDHLVYGLENIID</sequence>